<dbReference type="EC" id="2.2.1.7" evidence="1"/>
<dbReference type="EMBL" id="CU928158">
    <property type="protein sequence ID" value="CAQ90100.1"/>
    <property type="molecule type" value="Genomic_DNA"/>
</dbReference>
<dbReference type="RefSeq" id="WP_000006767.1">
    <property type="nucleotide sequence ID" value="NC_011740.1"/>
</dbReference>
<dbReference type="SMR" id="B7LMG7"/>
<dbReference type="GeneID" id="75056364"/>
<dbReference type="KEGG" id="efe:EFER_2605"/>
<dbReference type="HOGENOM" id="CLU_009227_1_4_6"/>
<dbReference type="OrthoDB" id="9803371at2"/>
<dbReference type="UniPathway" id="UPA00064">
    <property type="reaction ID" value="UER00091"/>
</dbReference>
<dbReference type="Proteomes" id="UP000000745">
    <property type="component" value="Chromosome"/>
</dbReference>
<dbReference type="GO" id="GO:0005829">
    <property type="term" value="C:cytosol"/>
    <property type="evidence" value="ECO:0007669"/>
    <property type="project" value="TreeGrafter"/>
</dbReference>
<dbReference type="GO" id="GO:0008661">
    <property type="term" value="F:1-deoxy-D-xylulose-5-phosphate synthase activity"/>
    <property type="evidence" value="ECO:0007669"/>
    <property type="project" value="UniProtKB-UniRule"/>
</dbReference>
<dbReference type="GO" id="GO:0000287">
    <property type="term" value="F:magnesium ion binding"/>
    <property type="evidence" value="ECO:0007669"/>
    <property type="project" value="UniProtKB-UniRule"/>
</dbReference>
<dbReference type="GO" id="GO:0030976">
    <property type="term" value="F:thiamine pyrophosphate binding"/>
    <property type="evidence" value="ECO:0007669"/>
    <property type="project" value="UniProtKB-UniRule"/>
</dbReference>
<dbReference type="GO" id="GO:0052865">
    <property type="term" value="P:1-deoxy-D-xylulose 5-phosphate biosynthetic process"/>
    <property type="evidence" value="ECO:0007669"/>
    <property type="project" value="UniProtKB-UniPathway"/>
</dbReference>
<dbReference type="GO" id="GO:0019288">
    <property type="term" value="P:isopentenyl diphosphate biosynthetic process, methylerythritol 4-phosphate pathway"/>
    <property type="evidence" value="ECO:0007669"/>
    <property type="project" value="TreeGrafter"/>
</dbReference>
<dbReference type="GO" id="GO:0016114">
    <property type="term" value="P:terpenoid biosynthetic process"/>
    <property type="evidence" value="ECO:0007669"/>
    <property type="project" value="UniProtKB-UniRule"/>
</dbReference>
<dbReference type="GO" id="GO:0009228">
    <property type="term" value="P:thiamine biosynthetic process"/>
    <property type="evidence" value="ECO:0007669"/>
    <property type="project" value="UniProtKB-UniRule"/>
</dbReference>
<dbReference type="CDD" id="cd02007">
    <property type="entry name" value="TPP_DXS"/>
    <property type="match status" value="1"/>
</dbReference>
<dbReference type="CDD" id="cd07033">
    <property type="entry name" value="TPP_PYR_DXS_TK_like"/>
    <property type="match status" value="1"/>
</dbReference>
<dbReference type="FunFam" id="3.40.50.920:FF:000002">
    <property type="entry name" value="1-deoxy-D-xylulose-5-phosphate synthase"/>
    <property type="match status" value="1"/>
</dbReference>
<dbReference type="FunFam" id="3.40.50.970:FF:000005">
    <property type="entry name" value="1-deoxy-D-xylulose-5-phosphate synthase"/>
    <property type="match status" value="1"/>
</dbReference>
<dbReference type="Gene3D" id="3.40.50.920">
    <property type="match status" value="1"/>
</dbReference>
<dbReference type="Gene3D" id="3.40.50.970">
    <property type="match status" value="2"/>
</dbReference>
<dbReference type="HAMAP" id="MF_00315">
    <property type="entry name" value="DXP_synth"/>
    <property type="match status" value="1"/>
</dbReference>
<dbReference type="InterPro" id="IPR005477">
    <property type="entry name" value="Dxylulose-5-P_synthase"/>
</dbReference>
<dbReference type="InterPro" id="IPR029061">
    <property type="entry name" value="THDP-binding"/>
</dbReference>
<dbReference type="InterPro" id="IPR009014">
    <property type="entry name" value="Transketo_C/PFOR_II"/>
</dbReference>
<dbReference type="InterPro" id="IPR005475">
    <property type="entry name" value="Transketolase-like_Pyr-bd"/>
</dbReference>
<dbReference type="InterPro" id="IPR020826">
    <property type="entry name" value="Transketolase_BS"/>
</dbReference>
<dbReference type="InterPro" id="IPR033248">
    <property type="entry name" value="Transketolase_C"/>
</dbReference>
<dbReference type="InterPro" id="IPR049557">
    <property type="entry name" value="Transketolase_CS"/>
</dbReference>
<dbReference type="NCBIfam" id="TIGR00204">
    <property type="entry name" value="dxs"/>
    <property type="match status" value="1"/>
</dbReference>
<dbReference type="NCBIfam" id="NF003933">
    <property type="entry name" value="PRK05444.2-2"/>
    <property type="match status" value="1"/>
</dbReference>
<dbReference type="PANTHER" id="PTHR43322">
    <property type="entry name" value="1-D-DEOXYXYLULOSE 5-PHOSPHATE SYNTHASE-RELATED"/>
    <property type="match status" value="1"/>
</dbReference>
<dbReference type="PANTHER" id="PTHR43322:SF5">
    <property type="entry name" value="1-DEOXY-D-XYLULOSE-5-PHOSPHATE SYNTHASE, CHLOROPLASTIC"/>
    <property type="match status" value="1"/>
</dbReference>
<dbReference type="Pfam" id="PF13292">
    <property type="entry name" value="DXP_synthase_N"/>
    <property type="match status" value="1"/>
</dbReference>
<dbReference type="Pfam" id="PF02779">
    <property type="entry name" value="Transket_pyr"/>
    <property type="match status" value="1"/>
</dbReference>
<dbReference type="Pfam" id="PF02780">
    <property type="entry name" value="Transketolase_C"/>
    <property type="match status" value="1"/>
</dbReference>
<dbReference type="SMART" id="SM00861">
    <property type="entry name" value="Transket_pyr"/>
    <property type="match status" value="1"/>
</dbReference>
<dbReference type="SUPFAM" id="SSF52518">
    <property type="entry name" value="Thiamin diphosphate-binding fold (THDP-binding)"/>
    <property type="match status" value="2"/>
</dbReference>
<dbReference type="SUPFAM" id="SSF52922">
    <property type="entry name" value="TK C-terminal domain-like"/>
    <property type="match status" value="1"/>
</dbReference>
<dbReference type="PROSITE" id="PS00801">
    <property type="entry name" value="TRANSKETOLASE_1"/>
    <property type="match status" value="1"/>
</dbReference>
<dbReference type="PROSITE" id="PS00802">
    <property type="entry name" value="TRANSKETOLASE_2"/>
    <property type="match status" value="1"/>
</dbReference>
<protein>
    <recommendedName>
        <fullName evidence="1">1-deoxy-D-xylulose-5-phosphate synthase</fullName>
        <ecNumber evidence="1">2.2.1.7</ecNumber>
    </recommendedName>
    <alternativeName>
        <fullName evidence="1">1-deoxyxylulose-5-phosphate synthase</fullName>
        <shortName evidence="1">DXP synthase</shortName>
        <shortName evidence="1">DXPS</shortName>
    </alternativeName>
</protein>
<sequence length="620" mass="67600">MSFDIAKYPTLALVDSPQELRLLPKESLPKLCDELRRYLLDSVSRSSGHFASGLGTVELTVALHYVYNTPFDQLIWDVGHQAYPHKILTGRRDKIGTIRQKGGLHPFPWRGESEYDVLSVGHSSTSISAGIGIAVAAEKEGKNRRTVCVIGDGAITAGMAFEAMNHAGDIRPDMLVVLNDNEMSISENVGALNNHLAQLLSGKLYSSLREGGKKVFSGVPPIKELLKRTEEHIKGMVVPGTLFEELGFNYIGPVDGHDVLGLITTLKNMRDLKGPQFLHIMTKKGRGYEPAEKDPITFHAVPKFDPSSGCLPKSSGGLPSYSKIFGDWLCETAAKDSKLMAITPAMREGSGMVEFSRKFPDRYFDVAIAEQHAVTFAAGLAIGGYKPIVAIYSTFLQRAYDQVLHDVAIQKLPVLFAIDRAGIVGADGQTHQGAFDLSYLRCIPEMVIMTPSDENECRQMLYTGYHYNDGPSAVRYPRGNAVGVELTPLEKLPIGKGIVKRRGEKLAILNFGTLMPEAAKVAESLNATLVDMRFVKPLDEALILEMAASHEALITIEENAIMGGAGSGVNEVLMAHRKPVPVLNIGLPDFFIPQGTQEEMRAELGLDAAGMEAKIKAWLA</sequence>
<feature type="chain" id="PRO_1000119550" description="1-deoxy-D-xylulose-5-phosphate synthase">
    <location>
        <begin position="1"/>
        <end position="620"/>
    </location>
</feature>
<feature type="binding site" evidence="1">
    <location>
        <position position="80"/>
    </location>
    <ligand>
        <name>thiamine diphosphate</name>
        <dbReference type="ChEBI" id="CHEBI:58937"/>
    </ligand>
</feature>
<feature type="binding site" evidence="1">
    <location>
        <begin position="121"/>
        <end position="123"/>
    </location>
    <ligand>
        <name>thiamine diphosphate</name>
        <dbReference type="ChEBI" id="CHEBI:58937"/>
    </ligand>
</feature>
<feature type="binding site" evidence="1">
    <location>
        <position position="152"/>
    </location>
    <ligand>
        <name>Mg(2+)</name>
        <dbReference type="ChEBI" id="CHEBI:18420"/>
    </ligand>
</feature>
<feature type="binding site" evidence="1">
    <location>
        <begin position="153"/>
        <end position="154"/>
    </location>
    <ligand>
        <name>thiamine diphosphate</name>
        <dbReference type="ChEBI" id="CHEBI:58937"/>
    </ligand>
</feature>
<feature type="binding site" evidence="1">
    <location>
        <position position="181"/>
    </location>
    <ligand>
        <name>Mg(2+)</name>
        <dbReference type="ChEBI" id="CHEBI:18420"/>
    </ligand>
</feature>
<feature type="binding site" evidence="1">
    <location>
        <position position="181"/>
    </location>
    <ligand>
        <name>thiamine diphosphate</name>
        <dbReference type="ChEBI" id="CHEBI:58937"/>
    </ligand>
</feature>
<feature type="binding site" evidence="1">
    <location>
        <position position="288"/>
    </location>
    <ligand>
        <name>thiamine diphosphate</name>
        <dbReference type="ChEBI" id="CHEBI:58937"/>
    </ligand>
</feature>
<feature type="binding site" evidence="1">
    <location>
        <position position="370"/>
    </location>
    <ligand>
        <name>thiamine diphosphate</name>
        <dbReference type="ChEBI" id="CHEBI:58937"/>
    </ligand>
</feature>
<keyword id="KW-0414">Isoprene biosynthesis</keyword>
<keyword id="KW-0460">Magnesium</keyword>
<keyword id="KW-0479">Metal-binding</keyword>
<keyword id="KW-0784">Thiamine biosynthesis</keyword>
<keyword id="KW-0786">Thiamine pyrophosphate</keyword>
<keyword id="KW-0808">Transferase</keyword>
<evidence type="ECO:0000255" key="1">
    <source>
        <dbReference type="HAMAP-Rule" id="MF_00315"/>
    </source>
</evidence>
<reference key="1">
    <citation type="journal article" date="2009" name="PLoS Genet.">
        <title>Organised genome dynamics in the Escherichia coli species results in highly diverse adaptive paths.</title>
        <authorList>
            <person name="Touchon M."/>
            <person name="Hoede C."/>
            <person name="Tenaillon O."/>
            <person name="Barbe V."/>
            <person name="Baeriswyl S."/>
            <person name="Bidet P."/>
            <person name="Bingen E."/>
            <person name="Bonacorsi S."/>
            <person name="Bouchier C."/>
            <person name="Bouvet O."/>
            <person name="Calteau A."/>
            <person name="Chiapello H."/>
            <person name="Clermont O."/>
            <person name="Cruveiller S."/>
            <person name="Danchin A."/>
            <person name="Diard M."/>
            <person name="Dossat C."/>
            <person name="Karoui M.E."/>
            <person name="Frapy E."/>
            <person name="Garry L."/>
            <person name="Ghigo J.M."/>
            <person name="Gilles A.M."/>
            <person name="Johnson J."/>
            <person name="Le Bouguenec C."/>
            <person name="Lescat M."/>
            <person name="Mangenot S."/>
            <person name="Martinez-Jehanne V."/>
            <person name="Matic I."/>
            <person name="Nassif X."/>
            <person name="Oztas S."/>
            <person name="Petit M.A."/>
            <person name="Pichon C."/>
            <person name="Rouy Z."/>
            <person name="Ruf C.S."/>
            <person name="Schneider D."/>
            <person name="Tourret J."/>
            <person name="Vacherie B."/>
            <person name="Vallenet D."/>
            <person name="Medigue C."/>
            <person name="Rocha E.P.C."/>
            <person name="Denamur E."/>
        </authorList>
    </citation>
    <scope>NUCLEOTIDE SEQUENCE [LARGE SCALE GENOMIC DNA]</scope>
    <source>
        <strain>ATCC 35469 / DSM 13698 / BCRC 15582 / CCUG 18766 / IAM 14443 / JCM 21226 / LMG 7866 / NBRC 102419 / NCTC 12128 / CDC 0568-73</strain>
    </source>
</reference>
<accession>B7LMG7</accession>
<organism>
    <name type="scientific">Escherichia fergusonii (strain ATCC 35469 / DSM 13698 / CCUG 18766 / IAM 14443 / JCM 21226 / LMG 7866 / NBRC 102419 / NCTC 12128 / CDC 0568-73)</name>
    <dbReference type="NCBI Taxonomy" id="585054"/>
    <lineage>
        <taxon>Bacteria</taxon>
        <taxon>Pseudomonadati</taxon>
        <taxon>Pseudomonadota</taxon>
        <taxon>Gammaproteobacteria</taxon>
        <taxon>Enterobacterales</taxon>
        <taxon>Enterobacteriaceae</taxon>
        <taxon>Escherichia</taxon>
    </lineage>
</organism>
<gene>
    <name evidence="1" type="primary">dxs</name>
    <name type="ordered locus">EFER_2605</name>
</gene>
<proteinExistence type="inferred from homology"/>
<comment type="function">
    <text evidence="1">Catalyzes the acyloin condensation reaction between C atoms 2 and 3 of pyruvate and glyceraldehyde 3-phosphate to yield 1-deoxy-D-xylulose-5-phosphate (DXP).</text>
</comment>
<comment type="catalytic activity">
    <reaction evidence="1">
        <text>D-glyceraldehyde 3-phosphate + pyruvate + H(+) = 1-deoxy-D-xylulose 5-phosphate + CO2</text>
        <dbReference type="Rhea" id="RHEA:12605"/>
        <dbReference type="ChEBI" id="CHEBI:15361"/>
        <dbReference type="ChEBI" id="CHEBI:15378"/>
        <dbReference type="ChEBI" id="CHEBI:16526"/>
        <dbReference type="ChEBI" id="CHEBI:57792"/>
        <dbReference type="ChEBI" id="CHEBI:59776"/>
        <dbReference type="EC" id="2.2.1.7"/>
    </reaction>
</comment>
<comment type="cofactor">
    <cofactor evidence="1">
        <name>Mg(2+)</name>
        <dbReference type="ChEBI" id="CHEBI:18420"/>
    </cofactor>
    <text evidence="1">Binds 1 Mg(2+) ion per subunit.</text>
</comment>
<comment type="cofactor">
    <cofactor evidence="1">
        <name>thiamine diphosphate</name>
        <dbReference type="ChEBI" id="CHEBI:58937"/>
    </cofactor>
    <text evidence="1">Binds 1 thiamine pyrophosphate per subunit.</text>
</comment>
<comment type="pathway">
    <text evidence="1">Metabolic intermediate biosynthesis; 1-deoxy-D-xylulose 5-phosphate biosynthesis; 1-deoxy-D-xylulose 5-phosphate from D-glyceraldehyde 3-phosphate and pyruvate: step 1/1.</text>
</comment>
<comment type="subunit">
    <text evidence="1">Homodimer.</text>
</comment>
<comment type="similarity">
    <text evidence="1">Belongs to the transketolase family. DXPS subfamily.</text>
</comment>
<name>DXS_ESCF3</name>